<accession>Q10444</accession>
<proteinExistence type="inferred from homology"/>
<evidence type="ECO:0000250" key="1"/>
<evidence type="ECO:0000255" key="2"/>
<evidence type="ECO:0000305" key="3"/>
<protein>
    <recommendedName>
        <fullName>Glucan 1,3-beta-glucosidase 2</fullName>
        <ecNumber>3.2.1.58</ecNumber>
    </recommendedName>
    <alternativeName>
        <fullName>Exo-1,3-beta-glucanase 2</fullName>
    </alternativeName>
</protein>
<reference key="1">
    <citation type="journal article" date="2002" name="Nature">
        <title>The genome sequence of Schizosaccharomyces pombe.</title>
        <authorList>
            <person name="Wood V."/>
            <person name="Gwilliam R."/>
            <person name="Rajandream M.A."/>
            <person name="Lyne M.H."/>
            <person name="Lyne R."/>
            <person name="Stewart A."/>
            <person name="Sgouros J.G."/>
            <person name="Peat N."/>
            <person name="Hayles J."/>
            <person name="Baker S.G."/>
            <person name="Basham D."/>
            <person name="Bowman S."/>
            <person name="Brooks K."/>
            <person name="Brown D."/>
            <person name="Brown S."/>
            <person name="Chillingworth T."/>
            <person name="Churcher C.M."/>
            <person name="Collins M."/>
            <person name="Connor R."/>
            <person name="Cronin A."/>
            <person name="Davis P."/>
            <person name="Feltwell T."/>
            <person name="Fraser A."/>
            <person name="Gentles S."/>
            <person name="Goble A."/>
            <person name="Hamlin N."/>
            <person name="Harris D.E."/>
            <person name="Hidalgo J."/>
            <person name="Hodgson G."/>
            <person name="Holroyd S."/>
            <person name="Hornsby T."/>
            <person name="Howarth S."/>
            <person name="Huckle E.J."/>
            <person name="Hunt S."/>
            <person name="Jagels K."/>
            <person name="James K.D."/>
            <person name="Jones L."/>
            <person name="Jones M."/>
            <person name="Leather S."/>
            <person name="McDonald S."/>
            <person name="McLean J."/>
            <person name="Mooney P."/>
            <person name="Moule S."/>
            <person name="Mungall K.L."/>
            <person name="Murphy L.D."/>
            <person name="Niblett D."/>
            <person name="Odell C."/>
            <person name="Oliver K."/>
            <person name="O'Neil S."/>
            <person name="Pearson D."/>
            <person name="Quail M.A."/>
            <person name="Rabbinowitsch E."/>
            <person name="Rutherford K.M."/>
            <person name="Rutter S."/>
            <person name="Saunders D."/>
            <person name="Seeger K."/>
            <person name="Sharp S."/>
            <person name="Skelton J."/>
            <person name="Simmonds M.N."/>
            <person name="Squares R."/>
            <person name="Squares S."/>
            <person name="Stevens K."/>
            <person name="Taylor K."/>
            <person name="Taylor R.G."/>
            <person name="Tivey A."/>
            <person name="Walsh S.V."/>
            <person name="Warren T."/>
            <person name="Whitehead S."/>
            <person name="Woodward J.R."/>
            <person name="Volckaert G."/>
            <person name="Aert R."/>
            <person name="Robben J."/>
            <person name="Grymonprez B."/>
            <person name="Weltjens I."/>
            <person name="Vanstreels E."/>
            <person name="Rieger M."/>
            <person name="Schaefer M."/>
            <person name="Mueller-Auer S."/>
            <person name="Gabel C."/>
            <person name="Fuchs M."/>
            <person name="Duesterhoeft A."/>
            <person name="Fritzc C."/>
            <person name="Holzer E."/>
            <person name="Moestl D."/>
            <person name="Hilbert H."/>
            <person name="Borzym K."/>
            <person name="Langer I."/>
            <person name="Beck A."/>
            <person name="Lehrach H."/>
            <person name="Reinhardt R."/>
            <person name="Pohl T.M."/>
            <person name="Eger P."/>
            <person name="Zimmermann W."/>
            <person name="Wedler H."/>
            <person name="Wambutt R."/>
            <person name="Purnelle B."/>
            <person name="Goffeau A."/>
            <person name="Cadieu E."/>
            <person name="Dreano S."/>
            <person name="Gloux S."/>
            <person name="Lelaure V."/>
            <person name="Mottier S."/>
            <person name="Galibert F."/>
            <person name="Aves S.J."/>
            <person name="Xiang Z."/>
            <person name="Hunt C."/>
            <person name="Moore K."/>
            <person name="Hurst S.M."/>
            <person name="Lucas M."/>
            <person name="Rochet M."/>
            <person name="Gaillardin C."/>
            <person name="Tallada V.A."/>
            <person name="Garzon A."/>
            <person name="Thode G."/>
            <person name="Daga R.R."/>
            <person name="Cruzado L."/>
            <person name="Jimenez J."/>
            <person name="Sanchez M."/>
            <person name="del Rey F."/>
            <person name="Benito J."/>
            <person name="Dominguez A."/>
            <person name="Revuelta J.L."/>
            <person name="Moreno S."/>
            <person name="Armstrong J."/>
            <person name="Forsburg S.L."/>
            <person name="Cerutti L."/>
            <person name="Lowe T."/>
            <person name="McCombie W.R."/>
            <person name="Paulsen I."/>
            <person name="Potashkin J."/>
            <person name="Shpakovski G.V."/>
            <person name="Ussery D."/>
            <person name="Barrell B.G."/>
            <person name="Nurse P."/>
        </authorList>
    </citation>
    <scope>NUCLEOTIDE SEQUENCE [LARGE SCALE GENOMIC DNA]</scope>
    <source>
        <strain>972 / ATCC 24843</strain>
    </source>
</reference>
<feature type="signal peptide" evidence="2">
    <location>
        <begin position="1"/>
        <end status="unknown"/>
    </location>
</feature>
<feature type="propeptide" id="PRO_0000007895" evidence="2">
    <location>
        <begin status="unknown"/>
        <end position="47"/>
    </location>
</feature>
<feature type="chain" id="PRO_0000007896" description="Glucan 1,3-beta-glucosidase 2">
    <location>
        <begin position="48"/>
        <end position="570"/>
    </location>
</feature>
<feature type="active site" description="Proton donor" evidence="1">
    <location>
        <position position="338"/>
    </location>
</feature>
<feature type="active site" description="Nucleophile" evidence="1">
    <location>
        <position position="439"/>
    </location>
</feature>
<feature type="glycosylation site" description="N-linked (GlcNAc...) asparagine" evidence="2">
    <location>
        <position position="91"/>
    </location>
</feature>
<feature type="glycosylation site" description="N-linked (GlcNAc...) asparagine" evidence="2">
    <location>
        <position position="116"/>
    </location>
</feature>
<feature type="glycosylation site" description="N-linked (GlcNAc...) asparagine" evidence="2">
    <location>
        <position position="121"/>
    </location>
</feature>
<feature type="glycosylation site" description="N-linked (GlcNAc...) asparagine" evidence="2">
    <location>
        <position position="184"/>
    </location>
</feature>
<feature type="glycosylation site" description="N-linked (GlcNAc...) asparagine" evidence="2">
    <location>
        <position position="203"/>
    </location>
</feature>
<feature type="glycosylation site" description="N-linked (GlcNAc...) asparagine" evidence="2">
    <location>
        <position position="248"/>
    </location>
</feature>
<feature type="glycosylation site" description="N-linked (GlcNAc...) asparagine" evidence="2">
    <location>
        <position position="364"/>
    </location>
</feature>
<feature type="glycosylation site" description="N-linked (GlcNAc...) asparagine" evidence="2">
    <location>
        <position position="525"/>
    </location>
</feature>
<feature type="glycosylation site" description="N-linked (GlcNAc...) asparagine" evidence="2">
    <location>
        <position position="552"/>
    </location>
</feature>
<sequence>MSNLLEAESSCDSKSLGVDDFTSKRCREIDKKALLITILLTFFVSLCVFLSIILPLIFLVIIPHAQSDRKIKDTNMETTNLGVNIIDEIFNSTQVPEWAKNSLLDTNTWLDTSDFNTSFTNETFAGLYTMGIFDKYDDSVQANPNVPPLNEPFPYGRLPIRGVNLGGWLSMEPFITPSFFQVKNETAYLVKDELSLHAYLGENATSVIENHYNTFVTKQTFYEIREAGLDHVRITFPYWILYSNEITNVSGIGWRYLLRSIEWAREQGLRVNLDLHAAPGNQNSWNHGGYLNQMEWLDGTVKGEENSQFTLKIHERLASFFSQKRYRNVVTIYGALNEPNFFVLDEHKITDWHKQAYAVIRQSNFTGLISLSDGFRGPGNWEDHFDPFHFPNILIDVHRYIIFNDFLIGLRPKDKLNVICKSWNEEMKLKAKLPTIIGEWSLADTDCAKFLNNVGEGARWDGTFTPNGGVASCSEKVGCRCDFANQDPENYEDSYRKFLYALATSQIETFDKTWGWFYWNWDTENATQWSYKKSWLAGLLPRLAYSTTKDFNCSMLDSKSFMEFDEQSEF</sequence>
<comment type="catalytic activity">
    <reaction>
        <text>Successive hydrolysis of beta-D-glucose units from the non-reducing ends of (1-&gt;3)-beta-D-glucans, releasing alpha-glucose.</text>
        <dbReference type="EC" id="3.2.1.58"/>
    </reaction>
</comment>
<comment type="subcellular location">
    <subcellularLocation>
        <location evidence="1">Secreted</location>
    </subcellularLocation>
</comment>
<comment type="similarity">
    <text evidence="3">Belongs to the glycosyl hydrolase 5 (cellulase A) family.</text>
</comment>
<name>EXG2_SCHPO</name>
<keyword id="KW-0961">Cell wall biogenesis/degradation</keyword>
<keyword id="KW-0325">Glycoprotein</keyword>
<keyword id="KW-0326">Glycosidase</keyword>
<keyword id="KW-0378">Hydrolase</keyword>
<keyword id="KW-1185">Reference proteome</keyword>
<keyword id="KW-0964">Secreted</keyword>
<keyword id="KW-0732">Signal</keyword>
<gene>
    <name type="primary">exg2</name>
    <name type="ORF">SPAC12B10.11</name>
</gene>
<organism>
    <name type="scientific">Schizosaccharomyces pombe (strain 972 / ATCC 24843)</name>
    <name type="common">Fission yeast</name>
    <dbReference type="NCBI Taxonomy" id="284812"/>
    <lineage>
        <taxon>Eukaryota</taxon>
        <taxon>Fungi</taxon>
        <taxon>Dikarya</taxon>
        <taxon>Ascomycota</taxon>
        <taxon>Taphrinomycotina</taxon>
        <taxon>Schizosaccharomycetes</taxon>
        <taxon>Schizosaccharomycetales</taxon>
        <taxon>Schizosaccharomycetaceae</taxon>
        <taxon>Schizosaccharomyces</taxon>
    </lineage>
</organism>
<dbReference type="EC" id="3.2.1.58"/>
<dbReference type="EMBL" id="CU329670">
    <property type="protein sequence ID" value="CAA94701.1"/>
    <property type="molecule type" value="Genomic_DNA"/>
</dbReference>
<dbReference type="PIR" id="T37578">
    <property type="entry name" value="T37578"/>
</dbReference>
<dbReference type="RefSeq" id="NP_594643.1">
    <property type="nucleotide sequence ID" value="NM_001020071.1"/>
</dbReference>
<dbReference type="SMR" id="Q10444"/>
<dbReference type="BioGRID" id="279425">
    <property type="interactions" value="2"/>
</dbReference>
<dbReference type="FunCoup" id="Q10444">
    <property type="interactions" value="35"/>
</dbReference>
<dbReference type="STRING" id="284812.Q10444"/>
<dbReference type="CAZy" id="GH5">
    <property type="family name" value="Glycoside Hydrolase Family 5"/>
</dbReference>
<dbReference type="GlyCosmos" id="Q10444">
    <property type="glycosylation" value="9 sites, No reported glycans"/>
</dbReference>
<dbReference type="PaxDb" id="4896-SPAC12B10.11.1"/>
<dbReference type="EnsemblFungi" id="SPAC12B10.11.1">
    <property type="protein sequence ID" value="SPAC12B10.11.1:pep"/>
    <property type="gene ID" value="SPAC12B10.11"/>
</dbReference>
<dbReference type="GeneID" id="2542987"/>
<dbReference type="KEGG" id="spo:2542987"/>
<dbReference type="PomBase" id="SPAC12B10.11">
    <property type="gene designation" value="exg2"/>
</dbReference>
<dbReference type="VEuPathDB" id="FungiDB:SPAC12B10.11"/>
<dbReference type="eggNOG" id="ENOG502QRG8">
    <property type="taxonomic scope" value="Eukaryota"/>
</dbReference>
<dbReference type="HOGENOM" id="CLU_004624_4_2_1"/>
<dbReference type="InParanoid" id="Q10444"/>
<dbReference type="OMA" id="WYWTWKT"/>
<dbReference type="PhylomeDB" id="Q10444"/>
<dbReference type="PRO" id="PR:Q10444"/>
<dbReference type="Proteomes" id="UP000002485">
    <property type="component" value="Chromosome I"/>
</dbReference>
<dbReference type="GO" id="GO:0000935">
    <property type="term" value="C:division septum"/>
    <property type="evidence" value="ECO:0000314"/>
    <property type="project" value="PomBase"/>
</dbReference>
<dbReference type="GO" id="GO:0005576">
    <property type="term" value="C:extracellular region"/>
    <property type="evidence" value="ECO:0007669"/>
    <property type="project" value="UniProtKB-SubCell"/>
</dbReference>
<dbReference type="GO" id="GO:1990819">
    <property type="term" value="C:mating projection actin fusion focus"/>
    <property type="evidence" value="ECO:0000314"/>
    <property type="project" value="PomBase"/>
</dbReference>
<dbReference type="GO" id="GO:0016020">
    <property type="term" value="C:membrane"/>
    <property type="evidence" value="ECO:0000314"/>
    <property type="project" value="PomBase"/>
</dbReference>
<dbReference type="GO" id="GO:0031520">
    <property type="term" value="C:plasma membrane of cell tip"/>
    <property type="evidence" value="ECO:0000314"/>
    <property type="project" value="PomBase"/>
</dbReference>
<dbReference type="GO" id="GO:0004338">
    <property type="term" value="F:glucan exo-1,3-beta-glucosidase activity"/>
    <property type="evidence" value="ECO:0000318"/>
    <property type="project" value="GO_Central"/>
</dbReference>
<dbReference type="GO" id="GO:1904541">
    <property type="term" value="P:fungal-type cell wall disassembly involved in conjugation with cellular fusion"/>
    <property type="evidence" value="ECO:0000316"/>
    <property type="project" value="PomBase"/>
</dbReference>
<dbReference type="GO" id="GO:0031505">
    <property type="term" value="P:fungal-type cell wall organization"/>
    <property type="evidence" value="ECO:0000315"/>
    <property type="project" value="PomBase"/>
</dbReference>
<dbReference type="GO" id="GO:0009251">
    <property type="term" value="P:glucan catabolic process"/>
    <property type="evidence" value="ECO:0000318"/>
    <property type="project" value="GO_Central"/>
</dbReference>
<dbReference type="FunFam" id="3.20.20.80:FF:000033">
    <property type="entry name" value="Glucan 1,3-beta-glucosidase A"/>
    <property type="match status" value="1"/>
</dbReference>
<dbReference type="Gene3D" id="3.20.20.80">
    <property type="entry name" value="Glycosidases"/>
    <property type="match status" value="1"/>
</dbReference>
<dbReference type="InterPro" id="IPR017853">
    <property type="entry name" value="Glycoside_hydrolase_SF"/>
</dbReference>
<dbReference type="InterPro" id="IPR050386">
    <property type="entry name" value="Glycosyl_hydrolase_5"/>
</dbReference>
<dbReference type="PANTHER" id="PTHR31297:SF34">
    <property type="entry name" value="GLUCAN 1,3-BETA-GLUCOSIDASE 2"/>
    <property type="match status" value="1"/>
</dbReference>
<dbReference type="PANTHER" id="PTHR31297">
    <property type="entry name" value="GLUCAN ENDO-1,6-BETA-GLUCOSIDASE B"/>
    <property type="match status" value="1"/>
</dbReference>
<dbReference type="SUPFAM" id="SSF51445">
    <property type="entry name" value="(Trans)glycosidases"/>
    <property type="match status" value="1"/>
</dbReference>